<accession>Q91573</accession>
<accession>Q91723</accession>
<protein>
    <recommendedName>
        <fullName>Mineralocorticoid receptor</fullName>
        <shortName>MR</shortName>
    </recommendedName>
    <alternativeName>
        <fullName>Nuclear receptor subfamily 3 group C member 2</fullName>
    </alternativeName>
</protein>
<proteinExistence type="evidence at transcript level"/>
<sequence>GNEIADSTVSLVKFIKPDPDAIFSSTCFGDTVSSDPAFSIPIKQESCKNTCSSALFKGSQSANPFPFMDGSYFAFMDDKDYYSLSGILGPPVSSFGDGFEGNGFSNQSLNVAIKQETEDSSFYPENNMPSSAIVGVNSCGQSFHYRIGAQGTISLSRPLNRDQSFQNLSSFPPMSSLVESWKTQSELAQNTLSSRRNDGFPVPGYIPENMSSTTLRSMSTGPSRPSKVCLVCGDEASGCHYGVVTCGSCKVFFKRAVEGKCSRQHSYLCAGRNDCIIDKIRRKNCPACRLQKCLQAGMNLGARKSKKLGKLKGVHEEHPQQPLQQTPTASPKEDTTLTSSSKEPSANSNSLVPLISAVSPAITLSAAVILENIEPEIVYAGYDNTQPDTAENLLSSLNQLAGKQMVQVVKWAKVIPGFRNLPLEDQITLIQYSWMCLSSFALSWRSYKHASSQFLYFAPDLIFNEERMRQSAMYDLCQGMQQISLEFSRLQLTFEEYTLMKVLLLLSTVPKDGLKCQAAFEEMRVNYIKELRKVLLKSPHNSGQSWQRYFQLTKLLDSMQDLVGDLLEFCFYTFRESQALKVEFPAMLVEIISDQLPKVESGIAKPLYFHRK</sequence>
<evidence type="ECO:0000250" key="1"/>
<evidence type="ECO:0000250" key="2">
    <source>
        <dbReference type="UniProtKB" id="P08235"/>
    </source>
</evidence>
<evidence type="ECO:0000255" key="3">
    <source>
        <dbReference type="PROSITE-ProRule" id="PRU00407"/>
    </source>
</evidence>
<evidence type="ECO:0000255" key="4">
    <source>
        <dbReference type="PROSITE-ProRule" id="PRU01189"/>
    </source>
</evidence>
<evidence type="ECO:0000256" key="5">
    <source>
        <dbReference type="SAM" id="MobiDB-lite"/>
    </source>
</evidence>
<evidence type="ECO:0000305" key="6"/>
<gene>
    <name type="primary">nr3c2</name>
    <name type="synonym">mlr</name>
</gene>
<keyword id="KW-0963">Cytoplasm</keyword>
<keyword id="KW-0238">DNA-binding</keyword>
<keyword id="KW-0446">Lipid-binding</keyword>
<keyword id="KW-0479">Metal-binding</keyword>
<keyword id="KW-0539">Nucleus</keyword>
<keyword id="KW-0675">Receptor</keyword>
<keyword id="KW-1185">Reference proteome</keyword>
<keyword id="KW-0754">Steroid-binding</keyword>
<keyword id="KW-0804">Transcription</keyword>
<keyword id="KW-0805">Transcription regulation</keyword>
<keyword id="KW-0862">Zinc</keyword>
<keyword id="KW-0863">Zinc-finger</keyword>
<organism>
    <name type="scientific">Xenopus laevis</name>
    <name type="common">African clawed frog</name>
    <dbReference type="NCBI Taxonomy" id="8355"/>
    <lineage>
        <taxon>Eukaryota</taxon>
        <taxon>Metazoa</taxon>
        <taxon>Chordata</taxon>
        <taxon>Craniata</taxon>
        <taxon>Vertebrata</taxon>
        <taxon>Euteleostomi</taxon>
        <taxon>Amphibia</taxon>
        <taxon>Batrachia</taxon>
        <taxon>Anura</taxon>
        <taxon>Pipoidea</taxon>
        <taxon>Pipidae</taxon>
        <taxon>Xenopodinae</taxon>
        <taxon>Xenopus</taxon>
        <taxon>Xenopus</taxon>
    </lineage>
</organism>
<name>MCR_XENLA</name>
<feature type="chain" id="PRO_0000053691" description="Mineralocorticoid receptor">
    <location>
        <begin position="1" status="less than"/>
        <end position="612"/>
    </location>
</feature>
<feature type="domain" description="NR LBD" evidence="4">
    <location>
        <begin position="350"/>
        <end position="592"/>
    </location>
</feature>
<feature type="DNA-binding region" description="Nuclear receptor" evidence="3">
    <location>
        <begin position="229"/>
        <end position="298"/>
    </location>
</feature>
<feature type="zinc finger region" description="NR C4-type" evidence="3">
    <location>
        <begin position="229"/>
        <end position="249"/>
    </location>
</feature>
<feature type="zinc finger region" description="NR C4-type" evidence="3">
    <location>
        <begin position="269"/>
        <end position="293"/>
    </location>
</feature>
<feature type="region of interest" description="Modulating">
    <location>
        <begin position="1" status="less than"/>
        <end position="228"/>
    </location>
</feature>
<feature type="region of interest" description="Hinge">
    <location>
        <begin position="299"/>
        <end position="349"/>
    </location>
</feature>
<feature type="region of interest" description="Disordered" evidence="5">
    <location>
        <begin position="310"/>
        <end position="348"/>
    </location>
</feature>
<feature type="region of interest" description="Important for coactivator binding" evidence="1">
    <location>
        <begin position="410"/>
        <end position="413"/>
    </location>
</feature>
<feature type="compositionally biased region" description="Low complexity" evidence="5">
    <location>
        <begin position="339"/>
        <end position="348"/>
    </location>
</feature>
<feature type="binding site" evidence="2">
    <location>
        <position position="229"/>
    </location>
    <ligand>
        <name>Zn(2+)</name>
        <dbReference type="ChEBI" id="CHEBI:29105"/>
        <label>1</label>
    </ligand>
</feature>
<feature type="binding site" evidence="2">
    <location>
        <position position="232"/>
    </location>
    <ligand>
        <name>Zn(2+)</name>
        <dbReference type="ChEBI" id="CHEBI:29105"/>
        <label>1</label>
    </ligand>
</feature>
<feature type="binding site" evidence="2">
    <location>
        <position position="246"/>
    </location>
    <ligand>
        <name>Zn(2+)</name>
        <dbReference type="ChEBI" id="CHEBI:29105"/>
        <label>1</label>
    </ligand>
</feature>
<feature type="binding site" evidence="2">
    <location>
        <position position="249"/>
    </location>
    <ligand>
        <name>Zn(2+)</name>
        <dbReference type="ChEBI" id="CHEBI:29105"/>
        <label>1</label>
    </ligand>
</feature>
<feature type="binding site" evidence="2">
    <location>
        <position position="269"/>
    </location>
    <ligand>
        <name>Zn(2+)</name>
        <dbReference type="ChEBI" id="CHEBI:29105"/>
        <label>2</label>
    </ligand>
</feature>
<feature type="binding site" evidence="2">
    <location>
        <position position="275"/>
    </location>
    <ligand>
        <name>Zn(2+)</name>
        <dbReference type="ChEBI" id="CHEBI:29105"/>
        <label>2</label>
    </ligand>
</feature>
<feature type="binding site" evidence="2">
    <location>
        <position position="285"/>
    </location>
    <ligand>
        <name>Zn(2+)</name>
        <dbReference type="ChEBI" id="CHEBI:29105"/>
        <label>2</label>
    </ligand>
</feature>
<feature type="binding site" evidence="2">
    <location>
        <position position="288"/>
    </location>
    <ligand>
        <name>Zn(2+)</name>
        <dbReference type="ChEBI" id="CHEBI:29105"/>
        <label>2</label>
    </ligand>
</feature>
<feature type="binding site" evidence="2">
    <location>
        <position position="398"/>
    </location>
    <ligand>
        <name>21-hydroxyprogesterone</name>
        <dbReference type="ChEBI" id="CHEBI:16973"/>
    </ligand>
</feature>
<feature type="binding site" evidence="2">
    <location>
        <position position="398"/>
    </location>
    <ligand>
        <name>aldosterone</name>
        <dbReference type="ChEBI" id="CHEBI:27584"/>
    </ligand>
</feature>
<feature type="binding site" evidence="2">
    <location>
        <position position="398"/>
    </location>
    <ligand>
        <name>progesterone</name>
        <dbReference type="ChEBI" id="CHEBI:17026"/>
    </ligand>
</feature>
<feature type="binding site" evidence="2">
    <location>
        <position position="404"/>
    </location>
    <ligand>
        <name>21-hydroxyprogesterone</name>
        <dbReference type="ChEBI" id="CHEBI:16973"/>
    </ligand>
</feature>
<feature type="binding site" evidence="2">
    <location>
        <position position="404"/>
    </location>
    <ligand>
        <name>aldosterone</name>
        <dbReference type="ChEBI" id="CHEBI:27584"/>
    </ligand>
</feature>
<feature type="binding site" evidence="2">
    <location>
        <position position="404"/>
    </location>
    <ligand>
        <name>progesterone</name>
        <dbReference type="ChEBI" id="CHEBI:17026"/>
    </ligand>
</feature>
<feature type="binding site" evidence="2">
    <location>
        <position position="445"/>
    </location>
    <ligand>
        <name>21-hydroxyprogesterone</name>
        <dbReference type="ChEBI" id="CHEBI:16973"/>
    </ligand>
</feature>
<feature type="binding site" evidence="2">
    <location>
        <position position="445"/>
    </location>
    <ligand>
        <name>aldosterone</name>
        <dbReference type="ChEBI" id="CHEBI:27584"/>
    </ligand>
</feature>
<feature type="binding site" evidence="2">
    <location>
        <position position="445"/>
    </location>
    <ligand>
        <name>progesterone</name>
        <dbReference type="ChEBI" id="CHEBI:17026"/>
    </ligand>
</feature>
<feature type="binding site" evidence="2">
    <location>
        <position position="573"/>
    </location>
    <ligand>
        <name>21-hydroxyprogesterone</name>
        <dbReference type="ChEBI" id="CHEBI:16973"/>
    </ligand>
</feature>
<feature type="binding site" evidence="2">
    <location>
        <position position="573"/>
    </location>
    <ligand>
        <name>aldosterone</name>
        <dbReference type="ChEBI" id="CHEBI:27584"/>
    </ligand>
</feature>
<feature type="binding site" evidence="2">
    <location>
        <position position="573"/>
    </location>
    <ligand>
        <name>progesterone</name>
        <dbReference type="ChEBI" id="CHEBI:17026"/>
    </ligand>
</feature>
<feature type="non-terminal residue">
    <location>
        <position position="1"/>
    </location>
</feature>
<dbReference type="EMBL" id="U15133">
    <property type="protein sequence ID" value="AAA75574.1"/>
    <property type="molecule type" value="mRNA"/>
</dbReference>
<dbReference type="EMBL" id="U15135">
    <property type="protein sequence ID" value="AAA75575.1"/>
    <property type="molecule type" value="Genomic_DNA"/>
</dbReference>
<dbReference type="SMR" id="Q91573"/>
<dbReference type="AGR" id="Xenbase:XB-GENE-483089"/>
<dbReference type="Xenbase" id="XB-GENE-483089">
    <property type="gene designation" value="nr3c2.L"/>
</dbReference>
<dbReference type="Proteomes" id="UP000186698">
    <property type="component" value="Unplaced"/>
</dbReference>
<dbReference type="GO" id="GO:0000785">
    <property type="term" value="C:chromatin"/>
    <property type="evidence" value="ECO:0000318"/>
    <property type="project" value="GO_Central"/>
</dbReference>
<dbReference type="GO" id="GO:0005737">
    <property type="term" value="C:cytoplasm"/>
    <property type="evidence" value="ECO:0007669"/>
    <property type="project" value="UniProtKB-SubCell"/>
</dbReference>
<dbReference type="GO" id="GO:0005634">
    <property type="term" value="C:nucleus"/>
    <property type="evidence" value="ECO:0000318"/>
    <property type="project" value="GO_Central"/>
</dbReference>
<dbReference type="GO" id="GO:0034056">
    <property type="term" value="F:estrogen response element binding"/>
    <property type="evidence" value="ECO:0000318"/>
    <property type="project" value="GO_Central"/>
</dbReference>
<dbReference type="GO" id="GO:0004879">
    <property type="term" value="F:nuclear receptor activity"/>
    <property type="evidence" value="ECO:0000318"/>
    <property type="project" value="GO_Central"/>
</dbReference>
<dbReference type="GO" id="GO:0005496">
    <property type="term" value="F:steroid binding"/>
    <property type="evidence" value="ECO:0007669"/>
    <property type="project" value="UniProtKB-KW"/>
</dbReference>
<dbReference type="GO" id="GO:0008270">
    <property type="term" value="F:zinc ion binding"/>
    <property type="evidence" value="ECO:0007669"/>
    <property type="project" value="UniProtKB-KW"/>
</dbReference>
<dbReference type="GO" id="GO:0030518">
    <property type="term" value="P:nuclear receptor-mediated steroid hormone signaling pathway"/>
    <property type="evidence" value="ECO:0000318"/>
    <property type="project" value="GO_Central"/>
</dbReference>
<dbReference type="GO" id="GO:0006357">
    <property type="term" value="P:regulation of transcription by RNA polymerase II"/>
    <property type="evidence" value="ECO:0000318"/>
    <property type="project" value="GO_Central"/>
</dbReference>
<dbReference type="CDD" id="cd07172">
    <property type="entry name" value="NR_DBD_GR_PR"/>
    <property type="match status" value="1"/>
</dbReference>
<dbReference type="CDD" id="cd07075">
    <property type="entry name" value="NR_LBD_MR"/>
    <property type="match status" value="1"/>
</dbReference>
<dbReference type="FunFam" id="1.10.565.10:FF:000004">
    <property type="entry name" value="Androgen receptor variant"/>
    <property type="match status" value="1"/>
</dbReference>
<dbReference type="FunFam" id="3.30.50.10:FF:000029">
    <property type="entry name" value="mineralocorticoid receptor isoform X1"/>
    <property type="match status" value="1"/>
</dbReference>
<dbReference type="Gene3D" id="3.30.50.10">
    <property type="entry name" value="Erythroid Transcription Factor GATA-1, subunit A"/>
    <property type="match status" value="1"/>
</dbReference>
<dbReference type="Gene3D" id="1.10.565.10">
    <property type="entry name" value="Retinoid X Receptor"/>
    <property type="match status" value="1"/>
</dbReference>
<dbReference type="InterPro" id="IPR035500">
    <property type="entry name" value="NHR-like_dom_sf"/>
</dbReference>
<dbReference type="InterPro" id="IPR000536">
    <property type="entry name" value="Nucl_hrmn_rcpt_lig-bd"/>
</dbReference>
<dbReference type="InterPro" id="IPR050200">
    <property type="entry name" value="Nuclear_hormone_rcpt_NR3"/>
</dbReference>
<dbReference type="InterPro" id="IPR001723">
    <property type="entry name" value="Nuclear_hrmn_rcpt"/>
</dbReference>
<dbReference type="InterPro" id="IPR001628">
    <property type="entry name" value="Znf_hrmn_rcpt"/>
</dbReference>
<dbReference type="InterPro" id="IPR013088">
    <property type="entry name" value="Znf_NHR/GATA"/>
</dbReference>
<dbReference type="PANTHER" id="PTHR48092">
    <property type="entry name" value="KNIRPS-RELATED PROTEIN-RELATED"/>
    <property type="match status" value="1"/>
</dbReference>
<dbReference type="Pfam" id="PF00104">
    <property type="entry name" value="Hormone_recep"/>
    <property type="match status" value="1"/>
</dbReference>
<dbReference type="Pfam" id="PF00105">
    <property type="entry name" value="zf-C4"/>
    <property type="match status" value="1"/>
</dbReference>
<dbReference type="PRINTS" id="PR00398">
    <property type="entry name" value="STRDHORMONER"/>
</dbReference>
<dbReference type="PRINTS" id="PR00047">
    <property type="entry name" value="STROIDFINGER"/>
</dbReference>
<dbReference type="SMART" id="SM00430">
    <property type="entry name" value="HOLI"/>
    <property type="match status" value="1"/>
</dbReference>
<dbReference type="SMART" id="SM00399">
    <property type="entry name" value="ZnF_C4"/>
    <property type="match status" value="1"/>
</dbReference>
<dbReference type="SUPFAM" id="SSF57716">
    <property type="entry name" value="Glucocorticoid receptor-like (DNA-binding domain)"/>
    <property type="match status" value="1"/>
</dbReference>
<dbReference type="SUPFAM" id="SSF48508">
    <property type="entry name" value="Nuclear receptor ligand-binding domain"/>
    <property type="match status" value="1"/>
</dbReference>
<dbReference type="PROSITE" id="PS51843">
    <property type="entry name" value="NR_LBD"/>
    <property type="match status" value="1"/>
</dbReference>
<dbReference type="PROSITE" id="PS00031">
    <property type="entry name" value="NUCLEAR_REC_DBD_1"/>
    <property type="match status" value="1"/>
</dbReference>
<dbReference type="PROSITE" id="PS51030">
    <property type="entry name" value="NUCLEAR_REC_DBD_2"/>
    <property type="match status" value="1"/>
</dbReference>
<reference key="1">
    <citation type="journal article" date="1995" name="Recent Prog. Horm. Res.">
        <title>Expression of the Xenopus laevis mineralocorticoid receptor during metamorphosis.</title>
        <authorList>
            <person name="Csikos T."/>
            <person name="Tay J."/>
            <person name="Danielsen M."/>
        </authorList>
    </citation>
    <scope>NUCLEOTIDE SEQUENCE [GENOMIC DNA / MRNA]</scope>
</reference>
<comment type="function">
    <text evidence="1">Receptor for both mineralocorticoids (MC) such as aldosterone and glucocorticoids (GC) such as corticosterone or cortisol. Binds to mineralocorticoid response elements (MRE) and transactivates target genes. The effect of MC is to increase ion and water transport and thus raise extracellular fluid volume and blood pressure and lower potassium levels (By similarity).</text>
</comment>
<comment type="subcellular location">
    <subcellularLocation>
        <location evidence="1">Cytoplasm</location>
    </subcellularLocation>
    <subcellularLocation>
        <location evidence="3">Nucleus</location>
    </subcellularLocation>
    <text evidence="1">Cytoplasmic and nuclear in the absence of ligand, nuclear after ligand-binding.</text>
</comment>
<comment type="domain">
    <text>Composed of three domains: a modulating N-terminal domain, a DNA-binding domain and a C-terminal ligand-binding domain.</text>
</comment>
<comment type="similarity">
    <text evidence="6">Belongs to the nuclear hormone receptor family. NR3 subfamily.</text>
</comment>